<comment type="function">
    <text evidence="1">Transcriptional coactivator that stimulates GCN4-dependent transcriptional activity by bridging the DNA-binding region of GCN4 and TBP (SPT15), thereby recruiting TBP to GCN4-bound promoters. Involved in induction of the ribosome quality control (RQC) pathway; a pathway that degrades nascent peptide chains during problematic translation. Required to prevent stalled ribosomes from frameshifting.</text>
</comment>
<comment type="similarity">
    <text evidence="4">Belongs to the MBF1 family.</text>
</comment>
<accession>Q4WX89</accession>
<sequence>MSDWDSVTRIGAKHRAGAAPRETVVRGKSALNAAQRQGLVIATEKKYATGNAAGKTAAMEGQHLTKVDRSDDIVKPKTVGLQVADAIKKRRNEEGYKMTQKELATKCNTTITVIQDFERGTAAPDQKVLSAMERVLNIKLRGSDIGKEKFPKKK</sequence>
<dbReference type="EMBL" id="AAHF01000002">
    <property type="protein sequence ID" value="EAL92714.1"/>
    <property type="molecule type" value="Genomic_DNA"/>
</dbReference>
<dbReference type="RefSeq" id="XP_754752.1">
    <property type="nucleotide sequence ID" value="XM_749659.1"/>
</dbReference>
<dbReference type="SMR" id="Q4WX89"/>
<dbReference type="FunCoup" id="Q4WX89">
    <property type="interactions" value="753"/>
</dbReference>
<dbReference type="STRING" id="330879.Q4WX89"/>
<dbReference type="EnsemblFungi" id="EAL92714">
    <property type="protein sequence ID" value="EAL92714"/>
    <property type="gene ID" value="AFUA_3G08630"/>
</dbReference>
<dbReference type="GeneID" id="3512155"/>
<dbReference type="KEGG" id="afm:AFUA_3G08630"/>
<dbReference type="VEuPathDB" id="FungiDB:Afu3g08630"/>
<dbReference type="eggNOG" id="KOG3398">
    <property type="taxonomic scope" value="Eukaryota"/>
</dbReference>
<dbReference type="HOGENOM" id="CLU_112609_0_0_1"/>
<dbReference type="InParanoid" id="Q4WX89"/>
<dbReference type="OMA" id="GKNKSCK"/>
<dbReference type="OrthoDB" id="10253401at2759"/>
<dbReference type="Proteomes" id="UP000002530">
    <property type="component" value="Chromosome 3"/>
</dbReference>
<dbReference type="GO" id="GO:0005634">
    <property type="term" value="C:nucleus"/>
    <property type="evidence" value="ECO:0000318"/>
    <property type="project" value="GO_Central"/>
</dbReference>
<dbReference type="GO" id="GO:0003677">
    <property type="term" value="F:DNA binding"/>
    <property type="evidence" value="ECO:0007669"/>
    <property type="project" value="UniProtKB-KW"/>
</dbReference>
<dbReference type="CDD" id="cd00093">
    <property type="entry name" value="HTH_XRE"/>
    <property type="match status" value="1"/>
</dbReference>
<dbReference type="FunFam" id="1.10.260.40:FF:000030">
    <property type="entry name" value="Coactivator bridging factor 1"/>
    <property type="match status" value="1"/>
</dbReference>
<dbReference type="Gene3D" id="1.10.260.40">
    <property type="entry name" value="lambda repressor-like DNA-binding domains"/>
    <property type="match status" value="1"/>
</dbReference>
<dbReference type="InterPro" id="IPR001387">
    <property type="entry name" value="Cro/C1-type_HTH"/>
</dbReference>
<dbReference type="InterPro" id="IPR010982">
    <property type="entry name" value="Lambda_DNA-bd_dom_sf"/>
</dbReference>
<dbReference type="InterPro" id="IPR013729">
    <property type="entry name" value="MBF1_N"/>
</dbReference>
<dbReference type="PANTHER" id="PTHR10245:SF15">
    <property type="entry name" value="ENDOTHELIAL DIFFERENTIATION-RELATED FACTOR 1"/>
    <property type="match status" value="1"/>
</dbReference>
<dbReference type="PANTHER" id="PTHR10245">
    <property type="entry name" value="ENDOTHELIAL DIFFERENTIATION-RELATED FACTOR 1 MULTIPROTEIN BRIDGING FACTOR 1"/>
    <property type="match status" value="1"/>
</dbReference>
<dbReference type="Pfam" id="PF01381">
    <property type="entry name" value="HTH_3"/>
    <property type="match status" value="1"/>
</dbReference>
<dbReference type="Pfam" id="PF08523">
    <property type="entry name" value="MBF1"/>
    <property type="match status" value="1"/>
</dbReference>
<dbReference type="SMART" id="SM00530">
    <property type="entry name" value="HTH_XRE"/>
    <property type="match status" value="1"/>
</dbReference>
<dbReference type="SUPFAM" id="SSF47413">
    <property type="entry name" value="lambda repressor-like DNA-binding domains"/>
    <property type="match status" value="1"/>
</dbReference>
<dbReference type="PROSITE" id="PS50943">
    <property type="entry name" value="HTH_CROC1"/>
    <property type="match status" value="1"/>
</dbReference>
<reference key="1">
    <citation type="journal article" date="2005" name="Nature">
        <title>Genomic sequence of the pathogenic and allergenic filamentous fungus Aspergillus fumigatus.</title>
        <authorList>
            <person name="Nierman W.C."/>
            <person name="Pain A."/>
            <person name="Anderson M.J."/>
            <person name="Wortman J.R."/>
            <person name="Kim H.S."/>
            <person name="Arroyo J."/>
            <person name="Berriman M."/>
            <person name="Abe K."/>
            <person name="Archer D.B."/>
            <person name="Bermejo C."/>
            <person name="Bennett J.W."/>
            <person name="Bowyer P."/>
            <person name="Chen D."/>
            <person name="Collins M."/>
            <person name="Coulsen R."/>
            <person name="Davies R."/>
            <person name="Dyer P.S."/>
            <person name="Farman M.L."/>
            <person name="Fedorova N."/>
            <person name="Fedorova N.D."/>
            <person name="Feldblyum T.V."/>
            <person name="Fischer R."/>
            <person name="Fosker N."/>
            <person name="Fraser A."/>
            <person name="Garcia J.L."/>
            <person name="Garcia M.J."/>
            <person name="Goble A."/>
            <person name="Goldman G.H."/>
            <person name="Gomi K."/>
            <person name="Griffith-Jones S."/>
            <person name="Gwilliam R."/>
            <person name="Haas B.J."/>
            <person name="Haas H."/>
            <person name="Harris D.E."/>
            <person name="Horiuchi H."/>
            <person name="Huang J."/>
            <person name="Humphray S."/>
            <person name="Jimenez J."/>
            <person name="Keller N."/>
            <person name="Khouri H."/>
            <person name="Kitamoto K."/>
            <person name="Kobayashi T."/>
            <person name="Konzack S."/>
            <person name="Kulkarni R."/>
            <person name="Kumagai T."/>
            <person name="Lafton A."/>
            <person name="Latge J.-P."/>
            <person name="Li W."/>
            <person name="Lord A."/>
            <person name="Lu C."/>
            <person name="Majoros W.H."/>
            <person name="May G.S."/>
            <person name="Miller B.L."/>
            <person name="Mohamoud Y."/>
            <person name="Molina M."/>
            <person name="Monod M."/>
            <person name="Mouyna I."/>
            <person name="Mulligan S."/>
            <person name="Murphy L.D."/>
            <person name="O'Neil S."/>
            <person name="Paulsen I."/>
            <person name="Penalva M.A."/>
            <person name="Pertea M."/>
            <person name="Price C."/>
            <person name="Pritchard B.L."/>
            <person name="Quail M.A."/>
            <person name="Rabbinowitsch E."/>
            <person name="Rawlins N."/>
            <person name="Rajandream M.A."/>
            <person name="Reichard U."/>
            <person name="Renauld H."/>
            <person name="Robson G.D."/>
            <person name="Rodriguez de Cordoba S."/>
            <person name="Rodriguez-Pena J.M."/>
            <person name="Ronning C.M."/>
            <person name="Rutter S."/>
            <person name="Salzberg S.L."/>
            <person name="Sanchez M."/>
            <person name="Sanchez-Ferrero J.C."/>
            <person name="Saunders D."/>
            <person name="Seeger K."/>
            <person name="Squares R."/>
            <person name="Squares S."/>
            <person name="Takeuchi M."/>
            <person name="Tekaia F."/>
            <person name="Turner G."/>
            <person name="Vazquez de Aldana C.R."/>
            <person name="Weidman J."/>
            <person name="White O."/>
            <person name="Woodward J.R."/>
            <person name="Yu J.-H."/>
            <person name="Fraser C.M."/>
            <person name="Galagan J.E."/>
            <person name="Asai K."/>
            <person name="Machida M."/>
            <person name="Hall N."/>
            <person name="Barrell B.G."/>
            <person name="Denning D.W."/>
        </authorList>
    </citation>
    <scope>NUCLEOTIDE SEQUENCE [LARGE SCALE GENOMIC DNA]</scope>
    <source>
        <strain>ATCC MYA-4609 / CBS 101355 / FGSC A1100 / Af293</strain>
    </source>
</reference>
<organism>
    <name type="scientific">Aspergillus fumigatus (strain ATCC MYA-4609 / CBS 101355 / FGSC A1100 / Af293)</name>
    <name type="common">Neosartorya fumigata</name>
    <dbReference type="NCBI Taxonomy" id="330879"/>
    <lineage>
        <taxon>Eukaryota</taxon>
        <taxon>Fungi</taxon>
        <taxon>Dikarya</taxon>
        <taxon>Ascomycota</taxon>
        <taxon>Pezizomycotina</taxon>
        <taxon>Eurotiomycetes</taxon>
        <taxon>Eurotiomycetidae</taxon>
        <taxon>Eurotiales</taxon>
        <taxon>Aspergillaceae</taxon>
        <taxon>Aspergillus</taxon>
        <taxon>Aspergillus subgen. Fumigati</taxon>
    </lineage>
</organism>
<proteinExistence type="inferred from homology"/>
<protein>
    <recommendedName>
        <fullName>Multiprotein-bridging factor 1</fullName>
    </recommendedName>
</protein>
<gene>
    <name type="primary">mbf1</name>
    <name type="ORF">AFUA_3G08630</name>
</gene>
<keyword id="KW-0010">Activator</keyword>
<keyword id="KW-0238">DNA-binding</keyword>
<keyword id="KW-1185">Reference proteome</keyword>
<keyword id="KW-0804">Transcription</keyword>
<keyword id="KW-0805">Transcription regulation</keyword>
<evidence type="ECO:0000250" key="1">
    <source>
        <dbReference type="UniProtKB" id="O14467"/>
    </source>
</evidence>
<evidence type="ECO:0000255" key="2">
    <source>
        <dbReference type="PROSITE-ProRule" id="PRU00257"/>
    </source>
</evidence>
<evidence type="ECO:0000256" key="3">
    <source>
        <dbReference type="SAM" id="MobiDB-lite"/>
    </source>
</evidence>
<evidence type="ECO:0000305" key="4"/>
<feature type="chain" id="PRO_0000149802" description="Multiprotein-bridging factor 1">
    <location>
        <begin position="1"/>
        <end position="154"/>
    </location>
</feature>
<feature type="domain" description="HTH cro/C1-type" evidence="2">
    <location>
        <begin position="87"/>
        <end position="143"/>
    </location>
</feature>
<feature type="DNA-binding region" description="H-T-H motif" evidence="2">
    <location>
        <begin position="100"/>
        <end position="119"/>
    </location>
</feature>
<feature type="region of interest" description="Disordered" evidence="3">
    <location>
        <begin position="1"/>
        <end position="23"/>
    </location>
</feature>
<name>MBF1_ASPFU</name>